<reference key="1">
    <citation type="journal article" date="1997" name="Proc. Natl. Acad. Sci. U.S.A.">
        <title>Differential utilization of CCR5 by macrophage and T cell tropic simian immunodeficiency virus strains.</title>
        <authorList>
            <person name="Edinger A.L."/>
            <person name="Amedee A."/>
            <person name="Miller K."/>
            <person name="Doranz B.J."/>
            <person name="Endres M."/>
            <person name="Sharron M."/>
            <person name="Samson M."/>
            <person name="Lu Z.-H."/>
            <person name="Clements J.E."/>
            <person name="Murphey-Corb M."/>
            <person name="Peiper S.C."/>
            <person name="Parmentier M."/>
            <person name="Broder C.C."/>
            <person name="Doms R.W."/>
        </authorList>
    </citation>
    <scope>NUCLEOTIDE SEQUENCE [GENOMIC DNA]</scope>
</reference>
<reference key="2">
    <citation type="journal article" date="1999" name="AIDS Res. Hum. Retroviruses">
        <title>Species-specific changes in the CCR5 gene from African and Asian nonhuman primates.</title>
        <authorList>
            <person name="Saksena N.K."/>
            <person name="Wang B."/>
            <person name="Novembre F.J."/>
            <person name="Bolton W."/>
            <person name="Smit T.K."/>
            <person name="Lal R.B."/>
        </authorList>
    </citation>
    <scope>NUCLEOTIDE SEQUENCE [GENOMIC DNA]</scope>
</reference>
<sequence>MDYQVSSPTYDIDYYTSEPCQKTNVKQIAARLLPPLYSLVFIFGFVGNMLVILILINCKRLKSMTDIYLLNLAISDLFFLLTVPFWAHYAAAQWDFGNTMCQLLTGLYFIGFFSGIFFIILLTIDRYLAIVHAVFALKARTVTFGVVTSVITWVVAVFASLPGIIFTRSQKEGLHYTCSSHFPYSQYQFWKNFQTLKIVILGLVLPLLVMVICYSGILKTLLRCRNEKKRHRAVRLIFTIMIVYFLFWAPYNIVLLLNTFQEFFGLNNCSSSNRLDQAMQVTETLGMTHCCINPIIYAFVGEKFRNYLLVFFQKHIAKRFCKCCSIFQQEAPERASSVYTRSTGEQEISVGL</sequence>
<gene>
    <name type="primary">CCR5</name>
    <name type="synonym">CMKBR5</name>
</gene>
<accession>P56439</accession>
<accession>Q9XS99</accession>
<protein>
    <recommendedName>
        <fullName>C-C chemokine receptor type 5</fullName>
        <shortName>C-C CKR-5</shortName>
        <shortName>CC-CKR-5</shortName>
        <shortName>CCR-5</shortName>
        <shortName>CCR5</shortName>
    </recommendedName>
    <cdAntigenName>CD195</cdAntigenName>
</protein>
<dbReference type="EMBL" id="AF005659">
    <property type="protein sequence ID" value="AAB62553.1"/>
    <property type="molecule type" value="Genomic_DNA"/>
</dbReference>
<dbReference type="EMBL" id="AF105291">
    <property type="protein sequence ID" value="AAD20560.1"/>
    <property type="molecule type" value="Genomic_DNA"/>
</dbReference>
<dbReference type="RefSeq" id="XP_004034064.1">
    <property type="nucleotide sequence ID" value="XM_004034016.4"/>
</dbReference>
<dbReference type="RefSeq" id="XP_004034065.1">
    <property type="nucleotide sequence ID" value="XM_004034017.2"/>
</dbReference>
<dbReference type="BMRB" id="P56439"/>
<dbReference type="SMR" id="P56439"/>
<dbReference type="FunCoup" id="P56439">
    <property type="interactions" value="1005"/>
</dbReference>
<dbReference type="STRING" id="9593.ENSGGOP00000051433"/>
<dbReference type="GlyCosmos" id="P56439">
    <property type="glycosylation" value="2 sites, No reported glycans"/>
</dbReference>
<dbReference type="Ensembl" id="ENSGGOT00000058542.1">
    <property type="protein sequence ID" value="ENSGGOP00000051433.1"/>
    <property type="gene ID" value="ENSGGOG00000040927.1"/>
</dbReference>
<dbReference type="GeneID" id="101153198"/>
<dbReference type="KEGG" id="ggo:101153198"/>
<dbReference type="CTD" id="1234"/>
<dbReference type="eggNOG" id="KOG3656">
    <property type="taxonomic scope" value="Eukaryota"/>
</dbReference>
<dbReference type="GeneTree" id="ENSGT01020000230359"/>
<dbReference type="HOGENOM" id="CLU_009579_8_3_1"/>
<dbReference type="InParanoid" id="P56439"/>
<dbReference type="OMA" id="HYTCSPH"/>
<dbReference type="OrthoDB" id="10654at9604"/>
<dbReference type="Proteomes" id="UP000001519">
    <property type="component" value="Chromosome 3"/>
</dbReference>
<dbReference type="Bgee" id="ENSGGOG00000040927">
    <property type="expression patterns" value="Expressed in liver and 4 other cell types or tissues"/>
</dbReference>
<dbReference type="GO" id="GO:0005737">
    <property type="term" value="C:cytoplasm"/>
    <property type="evidence" value="ECO:0000318"/>
    <property type="project" value="GO_Central"/>
</dbReference>
<dbReference type="GO" id="GO:0005768">
    <property type="term" value="C:endosome"/>
    <property type="evidence" value="ECO:0007669"/>
    <property type="project" value="Ensembl"/>
</dbReference>
<dbReference type="GO" id="GO:0009897">
    <property type="term" value="C:external side of plasma membrane"/>
    <property type="evidence" value="ECO:0000250"/>
    <property type="project" value="UniProtKB"/>
</dbReference>
<dbReference type="GO" id="GO:0003779">
    <property type="term" value="F:actin binding"/>
    <property type="evidence" value="ECO:0007669"/>
    <property type="project" value="Ensembl"/>
</dbReference>
<dbReference type="GO" id="GO:0016493">
    <property type="term" value="F:C-C chemokine receptor activity"/>
    <property type="evidence" value="ECO:0000250"/>
    <property type="project" value="UniProtKB"/>
</dbReference>
<dbReference type="GO" id="GO:0071791">
    <property type="term" value="F:chemokine (C-C motif) ligand 5 binding"/>
    <property type="evidence" value="ECO:0000318"/>
    <property type="project" value="GO_Central"/>
</dbReference>
<dbReference type="GO" id="GO:0042802">
    <property type="term" value="F:identical protein binding"/>
    <property type="evidence" value="ECO:0007669"/>
    <property type="project" value="Ensembl"/>
</dbReference>
<dbReference type="GO" id="GO:0019722">
    <property type="term" value="P:calcium-mediated signaling"/>
    <property type="evidence" value="ECO:0000318"/>
    <property type="project" value="GO_Central"/>
</dbReference>
<dbReference type="GO" id="GO:0060326">
    <property type="term" value="P:cell chemotaxis"/>
    <property type="evidence" value="ECO:0000318"/>
    <property type="project" value="GO_Central"/>
</dbReference>
<dbReference type="GO" id="GO:0007267">
    <property type="term" value="P:cell-cell signaling"/>
    <property type="evidence" value="ECO:0007669"/>
    <property type="project" value="Ensembl"/>
</dbReference>
<dbReference type="GO" id="GO:0071222">
    <property type="term" value="P:cellular response to lipopolysaccharide"/>
    <property type="evidence" value="ECO:0007669"/>
    <property type="project" value="Ensembl"/>
</dbReference>
<dbReference type="GO" id="GO:0006955">
    <property type="term" value="P:immune response"/>
    <property type="evidence" value="ECO:0000318"/>
    <property type="project" value="GO_Central"/>
</dbReference>
<dbReference type="GO" id="GO:0006954">
    <property type="term" value="P:inflammatory response"/>
    <property type="evidence" value="ECO:0000318"/>
    <property type="project" value="GO_Central"/>
</dbReference>
<dbReference type="GO" id="GO:0000165">
    <property type="term" value="P:MAPK cascade"/>
    <property type="evidence" value="ECO:0007669"/>
    <property type="project" value="Ensembl"/>
</dbReference>
<dbReference type="GO" id="GO:0007204">
    <property type="term" value="P:positive regulation of cytosolic calcium ion concentration"/>
    <property type="evidence" value="ECO:0000318"/>
    <property type="project" value="GO_Central"/>
</dbReference>
<dbReference type="GO" id="GO:0014808">
    <property type="term" value="P:release of sequestered calcium ion into cytosol by sarcoplasmic reticulum"/>
    <property type="evidence" value="ECO:0007669"/>
    <property type="project" value="Ensembl"/>
</dbReference>
<dbReference type="GO" id="GO:0070723">
    <property type="term" value="P:response to cholesterol"/>
    <property type="evidence" value="ECO:0007669"/>
    <property type="project" value="Ensembl"/>
</dbReference>
<dbReference type="CDD" id="cd15184">
    <property type="entry name" value="7tmA_CCR5_CCR2"/>
    <property type="match status" value="1"/>
</dbReference>
<dbReference type="FunFam" id="1.20.1070.10:FF:000026">
    <property type="entry name" value="C-C chemokine receptor type 5"/>
    <property type="match status" value="1"/>
</dbReference>
<dbReference type="Gene3D" id="1.20.1070.10">
    <property type="entry name" value="Rhodopsin 7-helix transmembrane proteins"/>
    <property type="match status" value="1"/>
</dbReference>
<dbReference type="InterPro" id="IPR050119">
    <property type="entry name" value="CCR1-9-like"/>
</dbReference>
<dbReference type="InterPro" id="IPR002240">
    <property type="entry name" value="Chemokine_CCR5"/>
</dbReference>
<dbReference type="InterPro" id="IPR000355">
    <property type="entry name" value="Chemokine_rcpt"/>
</dbReference>
<dbReference type="InterPro" id="IPR000276">
    <property type="entry name" value="GPCR_Rhodpsn"/>
</dbReference>
<dbReference type="InterPro" id="IPR017452">
    <property type="entry name" value="GPCR_Rhodpsn_7TM"/>
</dbReference>
<dbReference type="PANTHER" id="PTHR10489:SF686">
    <property type="entry name" value="C-C CHEMOKINE RECEPTOR TYPE 5"/>
    <property type="match status" value="1"/>
</dbReference>
<dbReference type="PANTHER" id="PTHR10489">
    <property type="entry name" value="CELL ADHESION MOLECULE"/>
    <property type="match status" value="1"/>
</dbReference>
<dbReference type="Pfam" id="PF00001">
    <property type="entry name" value="7tm_1"/>
    <property type="match status" value="1"/>
</dbReference>
<dbReference type="PRINTS" id="PR00657">
    <property type="entry name" value="CCCHEMOKINER"/>
</dbReference>
<dbReference type="PRINTS" id="PR01110">
    <property type="entry name" value="CHEMOKINER5"/>
</dbReference>
<dbReference type="PRINTS" id="PR00237">
    <property type="entry name" value="GPCRRHODOPSN"/>
</dbReference>
<dbReference type="SUPFAM" id="SSF81321">
    <property type="entry name" value="Family A G protein-coupled receptor-like"/>
    <property type="match status" value="1"/>
</dbReference>
<dbReference type="PROSITE" id="PS00237">
    <property type="entry name" value="G_PROTEIN_RECEP_F1_1"/>
    <property type="match status" value="1"/>
</dbReference>
<dbReference type="PROSITE" id="PS50262">
    <property type="entry name" value="G_PROTEIN_RECEP_F1_2"/>
    <property type="match status" value="1"/>
</dbReference>
<evidence type="ECO:0000250" key="1">
    <source>
        <dbReference type="UniProtKB" id="P51681"/>
    </source>
</evidence>
<evidence type="ECO:0000250" key="2">
    <source>
        <dbReference type="UniProtKB" id="Q9XT76"/>
    </source>
</evidence>
<evidence type="ECO:0000255" key="3"/>
<evidence type="ECO:0000255" key="4">
    <source>
        <dbReference type="PROSITE-ProRule" id="PRU00521"/>
    </source>
</evidence>
<evidence type="ECO:0000305" key="5"/>
<organism>
    <name type="scientific">Gorilla gorilla gorilla</name>
    <name type="common">Western lowland gorilla</name>
    <dbReference type="NCBI Taxonomy" id="9595"/>
    <lineage>
        <taxon>Eukaryota</taxon>
        <taxon>Metazoa</taxon>
        <taxon>Chordata</taxon>
        <taxon>Craniata</taxon>
        <taxon>Vertebrata</taxon>
        <taxon>Euteleostomi</taxon>
        <taxon>Mammalia</taxon>
        <taxon>Eutheria</taxon>
        <taxon>Euarchontoglires</taxon>
        <taxon>Primates</taxon>
        <taxon>Haplorrhini</taxon>
        <taxon>Catarrhini</taxon>
        <taxon>Hominidae</taxon>
        <taxon>Gorilla</taxon>
    </lineage>
</organism>
<keyword id="KW-1003">Cell membrane</keyword>
<keyword id="KW-1015">Disulfide bond</keyword>
<keyword id="KW-0297">G-protein coupled receptor</keyword>
<keyword id="KW-0325">Glycoprotein</keyword>
<keyword id="KW-0449">Lipoprotein</keyword>
<keyword id="KW-0472">Membrane</keyword>
<keyword id="KW-0564">Palmitate</keyword>
<keyword id="KW-0597">Phosphoprotein</keyword>
<keyword id="KW-0675">Receptor</keyword>
<keyword id="KW-1185">Reference proteome</keyword>
<keyword id="KW-0765">Sulfation</keyword>
<keyword id="KW-0807">Transducer</keyword>
<keyword id="KW-0812">Transmembrane</keyword>
<keyword id="KW-1133">Transmembrane helix</keyword>
<comment type="function">
    <text evidence="1">Receptor for a number of inflammatory CC-chemokines including CCL3/MIP-1-alpha, CCL4/MIP-1-beta and RANTES and subsequently transduces a signal by increasing the intracellular calcium ion level. May play a role in the control of granulocytic lineage proliferation or differentiation. Participates in T-lymphocyte migration to the infection site by acting as a chemotactic receptor.</text>
</comment>
<comment type="subunit">
    <text evidence="1">Interacts with PRAF2. Efficient ligand binding to CCL3/MIP-1alpha and CCL4/MIP-1beta requires sulfation, O-glycosylation and sialic acid modifications. Glycosylation on Ser-6 is required for efficient binding of CCL4. Interacts with GRK2. Interacts with ARRB1 and ARRB2. Interacts with CNIH4. Interacts with S100A4; this interaction stimulates T-lymphocyte chemotaxis.</text>
</comment>
<comment type="subcellular location">
    <subcellularLocation>
        <location evidence="2">Cell membrane</location>
        <topology evidence="2">Multi-pass membrane protein</topology>
    </subcellularLocation>
</comment>
<comment type="PTM">
    <text evidence="1">Sulfated on at least 2 of the N-terminal tyrosines. Sulfation is required for efficient binding of the chemokines, CCL3 and CCL4 (By similarity).</text>
</comment>
<comment type="PTM">
    <text evidence="1">Palmitoylation in the C-terminal is important for cell surface expression.</text>
</comment>
<comment type="PTM">
    <text evidence="1">Phosphorylation on serine residues in the C-terminal is stimulated by binding CC chemokines especially by APO-RANTES.</text>
</comment>
<comment type="PTM">
    <text evidence="1">O-glycosylated, but not N-glycosylated. Ser-6 appears to be the major site even if Ser-7 may be also O-glycosylated. Also sialylated glycans present which contribute to chemokine binding. Thr-16 and Ser-17 may also be glycosylated and, if so, with small moieties such as a T-antigen.</text>
</comment>
<comment type="similarity">
    <text evidence="4">Belongs to the G-protein coupled receptor 1 family.</text>
</comment>
<feature type="chain" id="PRO_0000069256" description="C-C chemokine receptor type 5">
    <location>
        <begin position="1"/>
        <end position="352"/>
    </location>
</feature>
<feature type="topological domain" description="Extracellular" evidence="3">
    <location>
        <begin position="1"/>
        <end position="30"/>
    </location>
</feature>
<feature type="transmembrane region" description="Helical; Name=1" evidence="3">
    <location>
        <begin position="31"/>
        <end position="58"/>
    </location>
</feature>
<feature type="topological domain" description="Cytoplasmic" evidence="3">
    <location>
        <begin position="59"/>
        <end position="68"/>
    </location>
</feature>
<feature type="transmembrane region" description="Helical; Name=2" evidence="3">
    <location>
        <begin position="69"/>
        <end position="89"/>
    </location>
</feature>
<feature type="topological domain" description="Extracellular" evidence="3">
    <location>
        <begin position="90"/>
        <end position="102"/>
    </location>
</feature>
<feature type="transmembrane region" description="Helical; Name=3" evidence="3">
    <location>
        <begin position="103"/>
        <end position="124"/>
    </location>
</feature>
<feature type="topological domain" description="Cytoplasmic" evidence="3">
    <location>
        <begin position="125"/>
        <end position="141"/>
    </location>
</feature>
<feature type="transmembrane region" description="Helical; Name=4" evidence="3">
    <location>
        <begin position="142"/>
        <end position="166"/>
    </location>
</feature>
<feature type="topological domain" description="Extracellular" evidence="3">
    <location>
        <begin position="167"/>
        <end position="198"/>
    </location>
</feature>
<feature type="transmembrane region" description="Helical; Name=5" evidence="3">
    <location>
        <begin position="199"/>
        <end position="218"/>
    </location>
</feature>
<feature type="topological domain" description="Cytoplasmic" evidence="3">
    <location>
        <begin position="219"/>
        <end position="235"/>
    </location>
</feature>
<feature type="transmembrane region" description="Helical; Name=6" evidence="3">
    <location>
        <begin position="236"/>
        <end position="260"/>
    </location>
</feature>
<feature type="topological domain" description="Extracellular" evidence="3">
    <location>
        <begin position="261"/>
        <end position="277"/>
    </location>
</feature>
<feature type="transmembrane region" description="Helical; Name=7" evidence="3">
    <location>
        <begin position="278"/>
        <end position="301"/>
    </location>
</feature>
<feature type="topological domain" description="Cytoplasmic" evidence="3">
    <location>
        <begin position="302"/>
        <end position="352"/>
    </location>
</feature>
<feature type="modified residue" description="Sulfotyrosine" evidence="1">
    <location>
        <position position="3"/>
    </location>
</feature>
<feature type="modified residue" description="Sulfotyrosine" evidence="3">
    <location>
        <position position="10"/>
    </location>
</feature>
<feature type="modified residue" description="Sulfotyrosine" evidence="3">
    <location>
        <position position="14"/>
    </location>
</feature>
<feature type="modified residue" description="Sulfotyrosine" evidence="3">
    <location>
        <position position="15"/>
    </location>
</feature>
<feature type="modified residue" description="Phosphoserine; by BARK1" evidence="1">
    <location>
        <position position="336"/>
    </location>
</feature>
<feature type="modified residue" description="Phosphoserine; by BARK1" evidence="1">
    <location>
        <position position="337"/>
    </location>
</feature>
<feature type="modified residue" description="Phosphoserine; by BARK1" evidence="1">
    <location>
        <position position="342"/>
    </location>
</feature>
<feature type="modified residue" description="Phosphoserine; by BARK1" evidence="1">
    <location>
        <position position="349"/>
    </location>
</feature>
<feature type="lipid moiety-binding region" description="S-palmitoyl cysteine" evidence="1">
    <location>
        <position position="321"/>
    </location>
</feature>
<feature type="lipid moiety-binding region" description="S-palmitoyl cysteine" evidence="1">
    <location>
        <position position="323"/>
    </location>
</feature>
<feature type="lipid moiety-binding region" description="S-palmitoyl cysteine" evidence="1">
    <location>
        <position position="324"/>
    </location>
</feature>
<feature type="glycosylation site" description="O-linked (GalNAc...) serine" evidence="1">
    <location>
        <position position="6"/>
    </location>
</feature>
<feature type="glycosylation site" description="O-linked (GalNAc...) serine" evidence="1">
    <location>
        <position position="7"/>
    </location>
</feature>
<feature type="disulfide bond" evidence="1">
    <location>
        <begin position="20"/>
        <end position="269"/>
    </location>
</feature>
<feature type="disulfide bond" evidence="4">
    <location>
        <begin position="101"/>
        <end position="178"/>
    </location>
</feature>
<feature type="sequence conflict" description="In Ref. 2; AAD20560." evidence="5" ref="2">
    <original>V</original>
    <variation>L</variation>
    <location>
        <position position="146"/>
    </location>
</feature>
<name>CCR5_GORGO</name>
<proteinExistence type="inferred from homology"/>